<comment type="function">
    <text>Zinc metalloprotease with hemolytic properties.</text>
</comment>
<comment type="cofactor">
    <cofactor evidence="1">
        <name>Ca(2+)</name>
        <dbReference type="ChEBI" id="CHEBI:29108"/>
    </cofactor>
    <text evidence="1">Binds 4 Ca(2+) ions per subunit.</text>
</comment>
<comment type="cofactor">
    <cofactor evidence="1">
        <name>Zn(2+)</name>
        <dbReference type="ChEBI" id="CHEBI:29105"/>
    </cofactor>
    <text evidence="1">Binds 1 zinc ion per subunit.</text>
</comment>
<comment type="biophysicochemical properties">
    <temperatureDependence>
        <text>Hemolytic activity is observed from 6 to 37 degrees Celsius for mammalian erythrocytes.</text>
    </temperatureDependence>
</comment>
<comment type="subcellular location">
    <subcellularLocation>
        <location>Secreted</location>
        <location>Cell wall</location>
    </subcellularLocation>
    <text>Not secreted, but probably remains attached or associated with the cell wall.</text>
</comment>
<comment type="induction">
    <text>Expression of the hemolysin is modulated by the availability of iron.</text>
</comment>
<comment type="similarity">
    <text evidence="5">Belongs to the peptidase M4 family.</text>
</comment>
<accession>P55111</accession>
<organism>
    <name type="scientific">Renibacterium salmoninarum</name>
    <dbReference type="NCBI Taxonomy" id="1646"/>
    <lineage>
        <taxon>Bacteria</taxon>
        <taxon>Bacillati</taxon>
        <taxon>Actinomycetota</taxon>
        <taxon>Actinomycetes</taxon>
        <taxon>Micrococcales</taxon>
        <taxon>Micrococcaceae</taxon>
        <taxon>Renibacterium</taxon>
    </lineage>
</organism>
<protein>
    <recommendedName>
        <fullName>Zinc metalloproteinase</fullName>
        <ecNumber>3.4.24.-</ecNumber>
    </recommendedName>
    <alternativeName>
        <fullName>Hemolysin</fullName>
    </alternativeName>
</protein>
<keyword id="KW-0106">Calcium</keyword>
<keyword id="KW-0134">Cell wall</keyword>
<keyword id="KW-0378">Hydrolase</keyword>
<keyword id="KW-0479">Metal-binding</keyword>
<keyword id="KW-0482">Metalloprotease</keyword>
<keyword id="KW-0645">Protease</keyword>
<keyword id="KW-0964">Secreted</keyword>
<keyword id="KW-0732">Signal</keyword>
<keyword id="KW-0862">Zinc</keyword>
<keyword id="KW-0865">Zymogen</keyword>
<name>PRZN_RENSA</name>
<sequence length="548" mass="56379">MKKYYAVTGIALAVGMLCTTQLAGATQAADPSVGSLDSSNVVTEFSAQGNVEQITFKSAIKSAPMSSARSAQTSAIIPGLKNLFVSAPGSDFSLNDSSNNYIKRFTQNIAGIPVLGSSITEVLDGQGAVTSAIGAVTSATKGAFPADLAAGQAAALASATKIASAGKDASAISLVDQKAIWFDAVLIGKGATGSVAVPAYQFSFTTGFAESRVLTVAANDGAILNDRTDRKDINRVVCDANSKVIDLEASNADALLKCGKTQANKPTRIEGQAASSVADVNSVYNFLNDTASFYGANTKANDLTALIGNDEGDGLGKAMRAVVRICVTDSQNGEQCPFANAFWYNGQMTYGQGVTTDDITGHELTHGVTEKTNGLVYANESGAINESMSDVFGEFIDLSNGSSDDTAANRWAIGEGSSLGVIRSMKDPGKYGEPAIYKGSNWKPTATNPNDNNDQGGVHSNSGVGNKLAFLITDGQTFNGQTVTGIGIAKAAQLYWAAQRQLTANATYSSLGKALNSACSANVSNNVAGTTAANCTQVANAIKAVGIK</sequence>
<gene>
    <name type="primary">hly</name>
</gene>
<reference key="1">
    <citation type="journal article" date="1995" name="Microbiology">
        <title>A gene from Renibacterium salmoninarum encoding a product which shows homology to bacterial zinc-metalloproteases.</title>
        <authorList>
            <person name="Grayson T.H."/>
            <person name="Evenden A.J."/>
            <person name="Gilpin M.L."/>
            <person name="Martin K.L."/>
            <person name="Munn C.B."/>
        </authorList>
    </citation>
    <scope>NUCLEOTIDE SEQUENCE [GENOMIC DNA]</scope>
    <source>
        <strain>MT444</strain>
    </source>
</reference>
<reference key="2">
    <citation type="submission" date="2001-10" db="EMBL/GenBank/DDBJ databases">
        <authorList>
            <person name="Grayson T.H."/>
        </authorList>
    </citation>
    <scope>SEQUENCE REVISION TO 149-170</scope>
</reference>
<dbReference type="EC" id="3.4.24.-"/>
<dbReference type="EMBL" id="X76499">
    <property type="protein sequence ID" value="CAA54032.2"/>
    <property type="molecule type" value="Genomic_DNA"/>
</dbReference>
<dbReference type="RefSeq" id="WP_012246528.1">
    <property type="nucleotide sequence ID" value="NZ_CP029237.1"/>
</dbReference>
<dbReference type="SMR" id="P55111"/>
<dbReference type="OMA" id="AGHEMAH"/>
<dbReference type="OrthoDB" id="291295at2"/>
<dbReference type="GO" id="GO:0005576">
    <property type="term" value="C:extracellular region"/>
    <property type="evidence" value="ECO:0007669"/>
    <property type="project" value="UniProtKB-KW"/>
</dbReference>
<dbReference type="GO" id="GO:0046872">
    <property type="term" value="F:metal ion binding"/>
    <property type="evidence" value="ECO:0007669"/>
    <property type="project" value="UniProtKB-KW"/>
</dbReference>
<dbReference type="GO" id="GO:0004222">
    <property type="term" value="F:metalloendopeptidase activity"/>
    <property type="evidence" value="ECO:0007669"/>
    <property type="project" value="InterPro"/>
</dbReference>
<dbReference type="GO" id="GO:0006508">
    <property type="term" value="P:proteolysis"/>
    <property type="evidence" value="ECO:0007669"/>
    <property type="project" value="UniProtKB-KW"/>
</dbReference>
<dbReference type="CDD" id="cd09597">
    <property type="entry name" value="M4_TLP"/>
    <property type="match status" value="1"/>
</dbReference>
<dbReference type="Gene3D" id="3.10.170.10">
    <property type="match status" value="1"/>
</dbReference>
<dbReference type="Gene3D" id="1.10.390.10">
    <property type="entry name" value="Neutral Protease Domain 2"/>
    <property type="match status" value="1"/>
</dbReference>
<dbReference type="InterPro" id="IPR023612">
    <property type="entry name" value="Peptidase_M4"/>
</dbReference>
<dbReference type="InterPro" id="IPR027268">
    <property type="entry name" value="Peptidase_M4/M1_CTD_sf"/>
</dbReference>
<dbReference type="InterPro" id="IPR001570">
    <property type="entry name" value="Peptidase_M4_C_domain"/>
</dbReference>
<dbReference type="InterPro" id="IPR013856">
    <property type="entry name" value="Peptidase_M4_domain"/>
</dbReference>
<dbReference type="InterPro" id="IPR050728">
    <property type="entry name" value="Zinc_Metalloprotease_M4"/>
</dbReference>
<dbReference type="PANTHER" id="PTHR33794">
    <property type="entry name" value="BACILLOLYSIN"/>
    <property type="match status" value="1"/>
</dbReference>
<dbReference type="PANTHER" id="PTHR33794:SF1">
    <property type="entry name" value="BACILLOLYSIN"/>
    <property type="match status" value="1"/>
</dbReference>
<dbReference type="Pfam" id="PF01447">
    <property type="entry name" value="Peptidase_M4"/>
    <property type="match status" value="1"/>
</dbReference>
<dbReference type="Pfam" id="PF02868">
    <property type="entry name" value="Peptidase_M4_C"/>
    <property type="match status" value="1"/>
</dbReference>
<dbReference type="PRINTS" id="PR00730">
    <property type="entry name" value="THERMOLYSIN"/>
</dbReference>
<dbReference type="SUPFAM" id="SSF55486">
    <property type="entry name" value="Metalloproteases ('zincins'), catalytic domain"/>
    <property type="match status" value="1"/>
</dbReference>
<dbReference type="PROSITE" id="PS00142">
    <property type="entry name" value="ZINC_PROTEASE"/>
    <property type="match status" value="1"/>
</dbReference>
<proteinExistence type="evidence at protein level"/>
<evidence type="ECO:0000250" key="1"/>
<evidence type="ECO:0000255" key="2"/>
<evidence type="ECO:0000255" key="3">
    <source>
        <dbReference type="PROSITE-ProRule" id="PRU10095"/>
    </source>
</evidence>
<evidence type="ECO:0000256" key="4">
    <source>
        <dbReference type="SAM" id="MobiDB-lite"/>
    </source>
</evidence>
<evidence type="ECO:0000305" key="5"/>
<feature type="signal peptide" evidence="2">
    <location>
        <begin position="1"/>
        <end position="28"/>
    </location>
</feature>
<feature type="propeptide" id="PRO_0000028618" evidence="2">
    <location>
        <begin position="29"/>
        <end status="unknown"/>
    </location>
</feature>
<feature type="chain" id="PRO_0000028619" description="Zinc metalloproteinase">
    <location>
        <begin status="unknown"/>
        <end position="548"/>
    </location>
</feature>
<feature type="region of interest" description="Disordered" evidence="4">
    <location>
        <begin position="440"/>
        <end position="459"/>
    </location>
</feature>
<feature type="compositionally biased region" description="Polar residues" evidence="4">
    <location>
        <begin position="442"/>
        <end position="459"/>
    </location>
</feature>
<feature type="active site" evidence="3">
    <location>
        <position position="363"/>
    </location>
</feature>
<feature type="active site" description="Proton donor" evidence="3">
    <location>
        <position position="459"/>
    </location>
</feature>
<feature type="binding site" evidence="3">
    <location>
        <position position="362"/>
    </location>
    <ligand>
        <name>Zn(2+)</name>
        <dbReference type="ChEBI" id="CHEBI:29105"/>
        <note>catalytic</note>
    </ligand>
</feature>
<feature type="binding site" evidence="3">
    <location>
        <position position="366"/>
    </location>
    <ligand>
        <name>Zn(2+)</name>
        <dbReference type="ChEBI" id="CHEBI:29105"/>
        <note>catalytic</note>
    </ligand>
</feature>
<feature type="binding site" evidence="3">
    <location>
        <position position="386"/>
    </location>
    <ligand>
        <name>Zn(2+)</name>
        <dbReference type="ChEBI" id="CHEBI:29105"/>
        <note>catalytic</note>
    </ligand>
</feature>